<proteinExistence type="inferred from homology"/>
<feature type="chain" id="PRO_5000166273" description="NADH-quinone oxidoreductase subunit K 2">
    <location>
        <begin position="1"/>
        <end position="114"/>
    </location>
</feature>
<feature type="transmembrane region" description="Helical" evidence="1">
    <location>
        <begin position="1"/>
        <end position="21"/>
    </location>
</feature>
<feature type="transmembrane region" description="Helical" evidence="1">
    <location>
        <begin position="29"/>
        <end position="49"/>
    </location>
</feature>
<feature type="transmembrane region" description="Helical" evidence="1">
    <location>
        <begin position="62"/>
        <end position="82"/>
    </location>
</feature>
<name>NUOK2_SYNFM</name>
<evidence type="ECO:0000255" key="1">
    <source>
        <dbReference type="HAMAP-Rule" id="MF_01456"/>
    </source>
</evidence>
<gene>
    <name evidence="1" type="primary">nuoK2</name>
    <name type="ordered locus">Sfum_1938</name>
</gene>
<sequence length="114" mass="12164">MIVPFGHVLLLAGALFGLGVFCAVARRNLIMIVLGVEIMLNAASIAFIGAAARWQSMEGQAFVLFILAVAATEVSIGLAIIVYAFRRTGSFDPAAYNLMKAGDAMQSFERRGPQ</sequence>
<organism>
    <name type="scientific">Syntrophobacter fumaroxidans (strain DSM 10017 / MPOB)</name>
    <dbReference type="NCBI Taxonomy" id="335543"/>
    <lineage>
        <taxon>Bacteria</taxon>
        <taxon>Pseudomonadati</taxon>
        <taxon>Thermodesulfobacteriota</taxon>
        <taxon>Syntrophobacteria</taxon>
        <taxon>Syntrophobacterales</taxon>
        <taxon>Syntrophobacteraceae</taxon>
        <taxon>Syntrophobacter</taxon>
    </lineage>
</organism>
<protein>
    <recommendedName>
        <fullName evidence="1">NADH-quinone oxidoreductase subunit K 2</fullName>
        <ecNumber evidence="1">7.1.1.-</ecNumber>
    </recommendedName>
    <alternativeName>
        <fullName evidence="1">NADH dehydrogenase I subunit K 2</fullName>
    </alternativeName>
    <alternativeName>
        <fullName evidence="1">NDH-1 subunit K 2</fullName>
    </alternativeName>
</protein>
<keyword id="KW-0997">Cell inner membrane</keyword>
<keyword id="KW-1003">Cell membrane</keyword>
<keyword id="KW-0472">Membrane</keyword>
<keyword id="KW-0520">NAD</keyword>
<keyword id="KW-0874">Quinone</keyword>
<keyword id="KW-1185">Reference proteome</keyword>
<keyword id="KW-1278">Translocase</keyword>
<keyword id="KW-0812">Transmembrane</keyword>
<keyword id="KW-1133">Transmembrane helix</keyword>
<keyword id="KW-0813">Transport</keyword>
<keyword id="KW-0830">Ubiquinone</keyword>
<reference key="1">
    <citation type="submission" date="2006-10" db="EMBL/GenBank/DDBJ databases">
        <title>Complete sequence of Syntrophobacter fumaroxidans MPOB.</title>
        <authorList>
            <consortium name="US DOE Joint Genome Institute"/>
            <person name="Copeland A."/>
            <person name="Lucas S."/>
            <person name="Lapidus A."/>
            <person name="Barry K."/>
            <person name="Detter J.C."/>
            <person name="Glavina del Rio T."/>
            <person name="Hammon N."/>
            <person name="Israni S."/>
            <person name="Pitluck S."/>
            <person name="Goltsman E.G."/>
            <person name="Martinez M."/>
            <person name="Schmutz J."/>
            <person name="Larimer F."/>
            <person name="Land M."/>
            <person name="Hauser L."/>
            <person name="Kyrpides N."/>
            <person name="Kim E."/>
            <person name="Boone D.R."/>
            <person name="Brockman F."/>
            <person name="Culley D."/>
            <person name="Ferry J."/>
            <person name="Gunsalus R."/>
            <person name="McInerney M.J."/>
            <person name="Morrison M."/>
            <person name="Plugge C."/>
            <person name="Rohlin L."/>
            <person name="Scholten J."/>
            <person name="Sieber J."/>
            <person name="Stams A.J.M."/>
            <person name="Worm P."/>
            <person name="Henstra A.M."/>
            <person name="Richardson P."/>
        </authorList>
    </citation>
    <scope>NUCLEOTIDE SEQUENCE [LARGE SCALE GENOMIC DNA]</scope>
    <source>
        <strain>DSM 10017 / MPOB</strain>
    </source>
</reference>
<comment type="function">
    <text evidence="1">NDH-1 shuttles electrons from NADH, via FMN and iron-sulfur (Fe-S) centers, to quinones in the respiratory chain. The immediate electron acceptor for the enzyme in this species is believed to be ubiquinone. Couples the redox reaction to proton translocation (for every two electrons transferred, four hydrogen ions are translocated across the cytoplasmic membrane), and thus conserves the redox energy in a proton gradient.</text>
</comment>
<comment type="catalytic activity">
    <reaction evidence="1">
        <text>a quinone + NADH + 5 H(+)(in) = a quinol + NAD(+) + 4 H(+)(out)</text>
        <dbReference type="Rhea" id="RHEA:57888"/>
        <dbReference type="ChEBI" id="CHEBI:15378"/>
        <dbReference type="ChEBI" id="CHEBI:24646"/>
        <dbReference type="ChEBI" id="CHEBI:57540"/>
        <dbReference type="ChEBI" id="CHEBI:57945"/>
        <dbReference type="ChEBI" id="CHEBI:132124"/>
    </reaction>
</comment>
<comment type="subunit">
    <text evidence="1">NDH-1 is composed of 14 different subunits. Subunits NuoA, H, J, K, L, M, N constitute the membrane sector of the complex.</text>
</comment>
<comment type="subcellular location">
    <subcellularLocation>
        <location evidence="1">Cell inner membrane</location>
        <topology evidence="1">Multi-pass membrane protein</topology>
    </subcellularLocation>
</comment>
<comment type="similarity">
    <text evidence="1">Belongs to the complex I subunit 4L family.</text>
</comment>
<accession>A0LJM1</accession>
<dbReference type="EC" id="7.1.1.-" evidence="1"/>
<dbReference type="EMBL" id="CP000478">
    <property type="protein sequence ID" value="ABK17623.1"/>
    <property type="molecule type" value="Genomic_DNA"/>
</dbReference>
<dbReference type="RefSeq" id="WP_011698793.1">
    <property type="nucleotide sequence ID" value="NC_008554.1"/>
</dbReference>
<dbReference type="SMR" id="A0LJM1"/>
<dbReference type="STRING" id="335543.Sfum_1938"/>
<dbReference type="KEGG" id="sfu:Sfum_1938"/>
<dbReference type="eggNOG" id="COG0713">
    <property type="taxonomic scope" value="Bacteria"/>
</dbReference>
<dbReference type="HOGENOM" id="CLU_144724_0_1_7"/>
<dbReference type="InParanoid" id="A0LJM1"/>
<dbReference type="OrthoDB" id="9810120at2"/>
<dbReference type="Proteomes" id="UP000001784">
    <property type="component" value="Chromosome"/>
</dbReference>
<dbReference type="GO" id="GO:0030964">
    <property type="term" value="C:NADH dehydrogenase complex"/>
    <property type="evidence" value="ECO:0007669"/>
    <property type="project" value="TreeGrafter"/>
</dbReference>
<dbReference type="GO" id="GO:0005886">
    <property type="term" value="C:plasma membrane"/>
    <property type="evidence" value="ECO:0007669"/>
    <property type="project" value="UniProtKB-SubCell"/>
</dbReference>
<dbReference type="GO" id="GO:0050136">
    <property type="term" value="F:NADH:ubiquinone reductase (non-electrogenic) activity"/>
    <property type="evidence" value="ECO:0007669"/>
    <property type="project" value="UniProtKB-UniRule"/>
</dbReference>
<dbReference type="GO" id="GO:0048038">
    <property type="term" value="F:quinone binding"/>
    <property type="evidence" value="ECO:0007669"/>
    <property type="project" value="UniProtKB-KW"/>
</dbReference>
<dbReference type="GO" id="GO:0042773">
    <property type="term" value="P:ATP synthesis coupled electron transport"/>
    <property type="evidence" value="ECO:0007669"/>
    <property type="project" value="InterPro"/>
</dbReference>
<dbReference type="FunFam" id="1.10.287.3510:FF:000001">
    <property type="entry name" value="NADH-quinone oxidoreductase subunit K"/>
    <property type="match status" value="1"/>
</dbReference>
<dbReference type="Gene3D" id="1.10.287.3510">
    <property type="match status" value="1"/>
</dbReference>
<dbReference type="HAMAP" id="MF_01456">
    <property type="entry name" value="NDH1_NuoK"/>
    <property type="match status" value="1"/>
</dbReference>
<dbReference type="InterPro" id="IPR001133">
    <property type="entry name" value="NADH_UbQ_OxRdtase_chain4L/K"/>
</dbReference>
<dbReference type="InterPro" id="IPR039428">
    <property type="entry name" value="NUOK/Mnh_C1-like"/>
</dbReference>
<dbReference type="NCBIfam" id="NF004320">
    <property type="entry name" value="PRK05715.1-2"/>
    <property type="match status" value="1"/>
</dbReference>
<dbReference type="PANTHER" id="PTHR11434:SF16">
    <property type="entry name" value="NADH-UBIQUINONE OXIDOREDUCTASE CHAIN 4L"/>
    <property type="match status" value="1"/>
</dbReference>
<dbReference type="PANTHER" id="PTHR11434">
    <property type="entry name" value="NADH-UBIQUINONE OXIDOREDUCTASE SUBUNIT ND4L"/>
    <property type="match status" value="1"/>
</dbReference>
<dbReference type="Pfam" id="PF00420">
    <property type="entry name" value="Oxidored_q2"/>
    <property type="match status" value="1"/>
</dbReference>